<keyword id="KW-0004">4Fe-4S</keyword>
<keyword id="KW-0408">Iron</keyword>
<keyword id="KW-0411">Iron-sulfur</keyword>
<keyword id="KW-0479">Metal-binding</keyword>
<keyword id="KW-0560">Oxidoreductase</keyword>
<keyword id="KW-1185">Reference proteome</keyword>
<keyword id="KW-0949">S-adenosyl-L-methionine</keyword>
<organism>
    <name type="scientific">Methanocaldococcus jannaschii (strain ATCC 43067 / DSM 2661 / JAL-1 / JCM 10045 / NBRC 100440)</name>
    <name type="common">Methanococcus jannaschii</name>
    <dbReference type="NCBI Taxonomy" id="243232"/>
    <lineage>
        <taxon>Archaea</taxon>
        <taxon>Methanobacteriati</taxon>
        <taxon>Methanobacteriota</taxon>
        <taxon>Methanomada group</taxon>
        <taxon>Methanococci</taxon>
        <taxon>Methanococcales</taxon>
        <taxon>Methanocaldococcaceae</taxon>
        <taxon>Methanocaldococcus</taxon>
    </lineage>
</organism>
<protein>
    <recommendedName>
        <fullName evidence="3">Putative glycyl-radical enzyme activating enzyme MJ1227</fullName>
        <shortName evidence="3">GRE activating enzyme MJ1227</shortName>
        <ecNumber evidence="1">1.97.1.-</ecNumber>
    </recommendedName>
</protein>
<sequence length="240" mass="27682">MKALVSGIVDLSTIDYPKKASAVIFLYGCNMKCPYCHNLKFMLEHKRGMTVEEIFNDIDFLFADAIVISGGEPTLQKDAVIEIARYAKEKGFPVKIDTNGTHPEVIEELIKNKLIDYVAIDVKCRFDKYKEFVKCREDGEEIKNKILKIIDLCKKNNVFVECRTTFVPKVMDEEDIEDIAKTVKDCDLYAIQQFEPKDAYDEEFKKLPMPKENELRELGKIAKKYIDNVVIRTINGTFEI</sequence>
<comment type="catalytic activity">
    <reaction evidence="1">
        <text>glycyl-[protein] + reduced [flavodoxin] + S-adenosyl-L-methionine = glycin-2-yl radical-[protein] + semiquinone [flavodoxin] + 5'-deoxyadenosine + L-methionine + H(+)</text>
        <dbReference type="Rhea" id="RHEA:61976"/>
        <dbReference type="Rhea" id="RHEA-COMP:10622"/>
        <dbReference type="Rhea" id="RHEA-COMP:14480"/>
        <dbReference type="Rhea" id="RHEA-COMP:15993"/>
        <dbReference type="Rhea" id="RHEA-COMP:15994"/>
        <dbReference type="ChEBI" id="CHEBI:15378"/>
        <dbReference type="ChEBI" id="CHEBI:17319"/>
        <dbReference type="ChEBI" id="CHEBI:29947"/>
        <dbReference type="ChEBI" id="CHEBI:32722"/>
        <dbReference type="ChEBI" id="CHEBI:57618"/>
        <dbReference type="ChEBI" id="CHEBI:57844"/>
        <dbReference type="ChEBI" id="CHEBI:59789"/>
        <dbReference type="ChEBI" id="CHEBI:140311"/>
    </reaction>
</comment>
<comment type="cofactor">
    <cofactor evidence="1">
        <name>[4Fe-4S] cluster</name>
        <dbReference type="ChEBI" id="CHEBI:49883"/>
    </cofactor>
    <text evidence="1">Binds 1 [4Fe-4S] cluster. The cluster is coordinated with 3 cysteines and an exchangeable S-adenosyl-L-methionine.</text>
</comment>
<comment type="similarity">
    <text evidence="3">Belongs to the organic radical-activating enzymes family.</text>
</comment>
<accession>Q58624</accession>
<proteinExistence type="inferred from homology"/>
<evidence type="ECO:0000250" key="1">
    <source>
        <dbReference type="UniProtKB" id="P0A9N4"/>
    </source>
</evidence>
<evidence type="ECO:0000255" key="2">
    <source>
        <dbReference type="PROSITE-ProRule" id="PRU01266"/>
    </source>
</evidence>
<evidence type="ECO:0000305" key="3"/>
<name>Y1227_METJA</name>
<feature type="chain" id="PRO_0000200545" description="Putative glycyl-radical enzyme activating enzyme MJ1227">
    <location>
        <begin position="1"/>
        <end position="240"/>
    </location>
</feature>
<feature type="domain" description="Radical SAM core" evidence="2">
    <location>
        <begin position="14"/>
        <end position="232"/>
    </location>
</feature>
<feature type="binding site" evidence="1">
    <location>
        <position position="29"/>
    </location>
    <ligand>
        <name>[4Fe-4S] cluster</name>
        <dbReference type="ChEBI" id="CHEBI:49883"/>
        <note>4Fe-4S-S-AdoMet</note>
    </ligand>
</feature>
<feature type="binding site" evidence="1">
    <location>
        <position position="33"/>
    </location>
    <ligand>
        <name>[4Fe-4S] cluster</name>
        <dbReference type="ChEBI" id="CHEBI:49883"/>
        <note>4Fe-4S-S-AdoMet</note>
    </ligand>
</feature>
<feature type="binding site" evidence="1">
    <location>
        <begin position="35"/>
        <end position="37"/>
    </location>
    <ligand>
        <name>S-adenosyl-L-methionine</name>
        <dbReference type="ChEBI" id="CHEBI:59789"/>
    </ligand>
</feature>
<feature type="binding site" evidence="1">
    <location>
        <position position="36"/>
    </location>
    <ligand>
        <name>[4Fe-4S] cluster</name>
        <dbReference type="ChEBI" id="CHEBI:49883"/>
        <note>4Fe-4S-S-AdoMet</note>
    </ligand>
</feature>
<feature type="binding site" evidence="1">
    <location>
        <position position="71"/>
    </location>
    <ligand>
        <name>S-adenosyl-L-methionine</name>
        <dbReference type="ChEBI" id="CHEBI:59789"/>
    </ligand>
</feature>
<feature type="binding site" evidence="1">
    <location>
        <begin position="126"/>
        <end position="128"/>
    </location>
    <ligand>
        <name>S-adenosyl-L-methionine</name>
        <dbReference type="ChEBI" id="CHEBI:59789"/>
    </ligand>
</feature>
<dbReference type="EC" id="1.97.1.-" evidence="1"/>
<dbReference type="EMBL" id="L77117">
    <property type="protein sequence ID" value="AAB99230.1"/>
    <property type="molecule type" value="Genomic_DNA"/>
</dbReference>
<dbReference type="PIR" id="B64453">
    <property type="entry name" value="B64453"/>
</dbReference>
<dbReference type="RefSeq" id="WP_010870739.1">
    <property type="nucleotide sequence ID" value="NC_000909.1"/>
</dbReference>
<dbReference type="SMR" id="Q58624"/>
<dbReference type="STRING" id="243232.MJ_1227"/>
<dbReference type="PaxDb" id="243232-MJ_1227"/>
<dbReference type="DNASU" id="1452123"/>
<dbReference type="EnsemblBacteria" id="AAB99230">
    <property type="protein sequence ID" value="AAB99230"/>
    <property type="gene ID" value="MJ_1227"/>
</dbReference>
<dbReference type="GeneID" id="1452123"/>
<dbReference type="KEGG" id="mja:MJ_1227"/>
<dbReference type="eggNOG" id="arCOG00952">
    <property type="taxonomic scope" value="Archaea"/>
</dbReference>
<dbReference type="HOGENOM" id="CLU_078147_2_1_2"/>
<dbReference type="InParanoid" id="Q58624"/>
<dbReference type="OrthoDB" id="371936at2157"/>
<dbReference type="PhylomeDB" id="Q58624"/>
<dbReference type="Proteomes" id="UP000000805">
    <property type="component" value="Chromosome"/>
</dbReference>
<dbReference type="GO" id="GO:0051539">
    <property type="term" value="F:4 iron, 4 sulfur cluster binding"/>
    <property type="evidence" value="ECO:0007669"/>
    <property type="project" value="UniProtKB-KW"/>
</dbReference>
<dbReference type="GO" id="GO:0046872">
    <property type="term" value="F:metal ion binding"/>
    <property type="evidence" value="ECO:0007669"/>
    <property type="project" value="UniProtKB-KW"/>
</dbReference>
<dbReference type="GO" id="GO:0016491">
    <property type="term" value="F:oxidoreductase activity"/>
    <property type="evidence" value="ECO:0007669"/>
    <property type="project" value="UniProtKB-KW"/>
</dbReference>
<dbReference type="CDD" id="cd01335">
    <property type="entry name" value="Radical_SAM"/>
    <property type="match status" value="1"/>
</dbReference>
<dbReference type="FunFam" id="3.20.20.70:FF:000356">
    <property type="entry name" value="Ribonucleotide reductase of class III (Anaerobic), activating protein"/>
    <property type="match status" value="1"/>
</dbReference>
<dbReference type="Gene3D" id="3.20.20.70">
    <property type="entry name" value="Aldolase class I"/>
    <property type="match status" value="1"/>
</dbReference>
<dbReference type="InterPro" id="IPR013785">
    <property type="entry name" value="Aldolase_TIM"/>
</dbReference>
<dbReference type="InterPro" id="IPR012840">
    <property type="entry name" value="NrdG2"/>
</dbReference>
<dbReference type="InterPro" id="IPR001989">
    <property type="entry name" value="Radical_activat_CS"/>
</dbReference>
<dbReference type="InterPro" id="IPR050377">
    <property type="entry name" value="Radical_SAM_PqqE_MftC-like"/>
</dbReference>
<dbReference type="InterPro" id="IPR007197">
    <property type="entry name" value="rSAM"/>
</dbReference>
<dbReference type="NCBIfam" id="TIGR02495">
    <property type="entry name" value="NrdG2"/>
    <property type="match status" value="1"/>
</dbReference>
<dbReference type="PANTHER" id="PTHR11228:SF27">
    <property type="entry name" value="GLYCYL-RADICAL ENZYME ACTIVATING ENZYME MJ1227-RELATED"/>
    <property type="match status" value="1"/>
</dbReference>
<dbReference type="PANTHER" id="PTHR11228">
    <property type="entry name" value="RADICAL SAM DOMAIN PROTEIN"/>
    <property type="match status" value="1"/>
</dbReference>
<dbReference type="Pfam" id="PF13353">
    <property type="entry name" value="Fer4_12"/>
    <property type="match status" value="1"/>
</dbReference>
<dbReference type="Pfam" id="PF04055">
    <property type="entry name" value="Radical_SAM"/>
    <property type="match status" value="1"/>
</dbReference>
<dbReference type="SFLD" id="SFLDS00029">
    <property type="entry name" value="Radical_SAM"/>
    <property type="match status" value="2"/>
</dbReference>
<dbReference type="SFLD" id="SFLDG01067">
    <property type="entry name" value="SPASM/twitch_domain_containing"/>
    <property type="match status" value="1"/>
</dbReference>
<dbReference type="SFLD" id="SFLDG01094">
    <property type="entry name" value="Uncharacterised_Radical_SAM_Su"/>
    <property type="match status" value="1"/>
</dbReference>
<dbReference type="SUPFAM" id="SSF102114">
    <property type="entry name" value="Radical SAM enzymes"/>
    <property type="match status" value="1"/>
</dbReference>
<dbReference type="PROSITE" id="PS01087">
    <property type="entry name" value="RADICAL_ACTIVATING"/>
    <property type="match status" value="1"/>
</dbReference>
<dbReference type="PROSITE" id="PS51918">
    <property type="entry name" value="RADICAL_SAM"/>
    <property type="match status" value="1"/>
</dbReference>
<gene>
    <name type="ordered locus">MJ1227</name>
</gene>
<reference key="1">
    <citation type="journal article" date="1996" name="Science">
        <title>Complete genome sequence of the methanogenic archaeon, Methanococcus jannaschii.</title>
        <authorList>
            <person name="Bult C.J."/>
            <person name="White O."/>
            <person name="Olsen G.J."/>
            <person name="Zhou L."/>
            <person name="Fleischmann R.D."/>
            <person name="Sutton G.G."/>
            <person name="Blake J.A."/>
            <person name="FitzGerald L.M."/>
            <person name="Clayton R.A."/>
            <person name="Gocayne J.D."/>
            <person name="Kerlavage A.R."/>
            <person name="Dougherty B.A."/>
            <person name="Tomb J.-F."/>
            <person name="Adams M.D."/>
            <person name="Reich C.I."/>
            <person name="Overbeek R."/>
            <person name="Kirkness E.F."/>
            <person name="Weinstock K.G."/>
            <person name="Merrick J.M."/>
            <person name="Glodek A."/>
            <person name="Scott J.L."/>
            <person name="Geoghagen N.S.M."/>
            <person name="Weidman J.F."/>
            <person name="Fuhrmann J.L."/>
            <person name="Nguyen D."/>
            <person name="Utterback T.R."/>
            <person name="Kelley J.M."/>
            <person name="Peterson J.D."/>
            <person name="Sadow P.W."/>
            <person name="Hanna M.C."/>
            <person name="Cotton M.D."/>
            <person name="Roberts K.M."/>
            <person name="Hurst M.A."/>
            <person name="Kaine B.P."/>
            <person name="Borodovsky M."/>
            <person name="Klenk H.-P."/>
            <person name="Fraser C.M."/>
            <person name="Smith H.O."/>
            <person name="Woese C.R."/>
            <person name="Venter J.C."/>
        </authorList>
    </citation>
    <scope>NUCLEOTIDE SEQUENCE [LARGE SCALE GENOMIC DNA]</scope>
    <source>
        <strain>ATCC 43067 / DSM 2661 / JAL-1 / JCM 10045 / NBRC 100440</strain>
    </source>
</reference>